<accession>Q98D57</accession>
<sequence length="397" mass="42629">MTLPTDPAANLAALIRCASVTPAEGGALGALETMLKPLGFLVDRPVFSEDGTPDIENLYARRSGNGPHLMFAGHTDVVPVGDEAAWTHPPFAAEIANGEMYGRGAVDMKGGIACFVAAIARHVENNGGPKGSVSLLITGDEEGPAINGTVKLLEWAASRGEKWDASIVGEPTNPDTLGDMIKIGRRGSLSGSITVNGRQGHAAYPQLADNPVRGLMGLVDALLHPVFDKGTKDFQPTNLEVTSIDVGNPATNVIPAKATATFNIRFNDTWTAETVQAEIHNRLDQAAKRKKYRPGKKTPVDYDLVWRDRPSHVFLTRDDKLVDTLAGSIKAAVGKEPTLSTSGGTSDARFIKDYCPVVEFGLVGKTMHMVDERVALADLETLTRIYQRFIEDWFGQG</sequence>
<protein>
    <recommendedName>
        <fullName evidence="1">Succinyl-diaminopimelate desuccinylase</fullName>
        <shortName evidence="1">SDAP desuccinylase</shortName>
        <ecNumber evidence="1">3.5.1.18</ecNumber>
    </recommendedName>
    <alternativeName>
        <fullName evidence="1">N-succinyl-LL-2,6-diaminoheptanedioate amidohydrolase</fullName>
    </alternativeName>
</protein>
<comment type="function">
    <text evidence="1">Catalyzes the hydrolysis of N-succinyl-L,L-diaminopimelic acid (SDAP), forming succinate and LL-2,6-diaminopimelate (DAP), an intermediate involved in the bacterial biosynthesis of lysine and meso-diaminopimelic acid, an essential component of bacterial cell walls.</text>
</comment>
<comment type="catalytic activity">
    <reaction evidence="1">
        <text>N-succinyl-(2S,6S)-2,6-diaminopimelate + H2O = (2S,6S)-2,6-diaminopimelate + succinate</text>
        <dbReference type="Rhea" id="RHEA:22608"/>
        <dbReference type="ChEBI" id="CHEBI:15377"/>
        <dbReference type="ChEBI" id="CHEBI:30031"/>
        <dbReference type="ChEBI" id="CHEBI:57609"/>
        <dbReference type="ChEBI" id="CHEBI:58087"/>
        <dbReference type="EC" id="3.5.1.18"/>
    </reaction>
</comment>
<comment type="cofactor">
    <cofactor evidence="1">
        <name>Zn(2+)</name>
        <dbReference type="ChEBI" id="CHEBI:29105"/>
    </cofactor>
    <cofactor evidence="1">
        <name>Co(2+)</name>
        <dbReference type="ChEBI" id="CHEBI:48828"/>
    </cofactor>
    <text evidence="1">Binds 2 Zn(2+) or Co(2+) ions per subunit.</text>
</comment>
<comment type="pathway">
    <text evidence="1">Amino-acid biosynthesis; L-lysine biosynthesis via DAP pathway; LL-2,6-diaminopimelate from (S)-tetrahydrodipicolinate (succinylase route): step 3/3.</text>
</comment>
<comment type="subunit">
    <text evidence="1">Homodimer.</text>
</comment>
<comment type="similarity">
    <text evidence="1">Belongs to the peptidase M20A family. DapE subfamily.</text>
</comment>
<name>DAPE_RHILO</name>
<reference key="1">
    <citation type="journal article" date="2000" name="DNA Res.">
        <title>Complete genome structure of the nitrogen-fixing symbiotic bacterium Mesorhizobium loti.</title>
        <authorList>
            <person name="Kaneko T."/>
            <person name="Nakamura Y."/>
            <person name="Sato S."/>
            <person name="Asamizu E."/>
            <person name="Kato T."/>
            <person name="Sasamoto S."/>
            <person name="Watanabe A."/>
            <person name="Idesawa K."/>
            <person name="Ishikawa A."/>
            <person name="Kawashima K."/>
            <person name="Kimura T."/>
            <person name="Kishida Y."/>
            <person name="Kiyokawa C."/>
            <person name="Kohara M."/>
            <person name="Matsumoto M."/>
            <person name="Matsuno A."/>
            <person name="Mochizuki Y."/>
            <person name="Nakayama S."/>
            <person name="Nakazaki N."/>
            <person name="Shimpo S."/>
            <person name="Sugimoto M."/>
            <person name="Takeuchi C."/>
            <person name="Yamada M."/>
            <person name="Tabata S."/>
        </authorList>
    </citation>
    <scope>NUCLEOTIDE SEQUENCE [LARGE SCALE GENOMIC DNA]</scope>
    <source>
        <strain>LMG 29417 / CECT 9101 / MAFF 303099</strain>
    </source>
</reference>
<organism>
    <name type="scientific">Mesorhizobium japonicum (strain LMG 29417 / CECT 9101 / MAFF 303099)</name>
    <name type="common">Mesorhizobium loti (strain MAFF 303099)</name>
    <dbReference type="NCBI Taxonomy" id="266835"/>
    <lineage>
        <taxon>Bacteria</taxon>
        <taxon>Pseudomonadati</taxon>
        <taxon>Pseudomonadota</taxon>
        <taxon>Alphaproteobacteria</taxon>
        <taxon>Hyphomicrobiales</taxon>
        <taxon>Phyllobacteriaceae</taxon>
        <taxon>Mesorhizobium</taxon>
    </lineage>
</organism>
<dbReference type="EC" id="3.5.1.18" evidence="1"/>
<dbReference type="EMBL" id="BA000012">
    <property type="protein sequence ID" value="BAB51414.1"/>
    <property type="molecule type" value="Genomic_DNA"/>
</dbReference>
<dbReference type="RefSeq" id="WP_010912755.1">
    <property type="nucleotide sequence ID" value="NC_002678.2"/>
</dbReference>
<dbReference type="SMR" id="Q98D57"/>
<dbReference type="KEGG" id="mlo:mlr4849"/>
<dbReference type="PATRIC" id="fig|266835.9.peg.3831"/>
<dbReference type="eggNOG" id="COG0624">
    <property type="taxonomic scope" value="Bacteria"/>
</dbReference>
<dbReference type="HOGENOM" id="CLU_021802_4_0_5"/>
<dbReference type="UniPathway" id="UPA00034">
    <property type="reaction ID" value="UER00021"/>
</dbReference>
<dbReference type="Proteomes" id="UP000000552">
    <property type="component" value="Chromosome"/>
</dbReference>
<dbReference type="GO" id="GO:0008777">
    <property type="term" value="F:acetylornithine deacetylase activity"/>
    <property type="evidence" value="ECO:0007669"/>
    <property type="project" value="TreeGrafter"/>
</dbReference>
<dbReference type="GO" id="GO:0050897">
    <property type="term" value="F:cobalt ion binding"/>
    <property type="evidence" value="ECO:0007669"/>
    <property type="project" value="UniProtKB-UniRule"/>
</dbReference>
<dbReference type="GO" id="GO:0009014">
    <property type="term" value="F:succinyl-diaminopimelate desuccinylase activity"/>
    <property type="evidence" value="ECO:0007669"/>
    <property type="project" value="UniProtKB-UniRule"/>
</dbReference>
<dbReference type="GO" id="GO:0008270">
    <property type="term" value="F:zinc ion binding"/>
    <property type="evidence" value="ECO:0007669"/>
    <property type="project" value="UniProtKB-UniRule"/>
</dbReference>
<dbReference type="GO" id="GO:0019877">
    <property type="term" value="P:diaminopimelate biosynthetic process"/>
    <property type="evidence" value="ECO:0007669"/>
    <property type="project" value="UniProtKB-UniRule"/>
</dbReference>
<dbReference type="GO" id="GO:0006526">
    <property type="term" value="P:L-arginine biosynthetic process"/>
    <property type="evidence" value="ECO:0007669"/>
    <property type="project" value="TreeGrafter"/>
</dbReference>
<dbReference type="GO" id="GO:0009089">
    <property type="term" value="P:lysine biosynthetic process via diaminopimelate"/>
    <property type="evidence" value="ECO:0007669"/>
    <property type="project" value="UniProtKB-UniRule"/>
</dbReference>
<dbReference type="CDD" id="cd03891">
    <property type="entry name" value="M20_DapE_proteobac"/>
    <property type="match status" value="1"/>
</dbReference>
<dbReference type="Gene3D" id="3.30.70.360">
    <property type="match status" value="1"/>
</dbReference>
<dbReference type="Gene3D" id="3.40.630.10">
    <property type="entry name" value="Zn peptidases"/>
    <property type="match status" value="2"/>
</dbReference>
<dbReference type="HAMAP" id="MF_01690">
    <property type="entry name" value="DapE"/>
    <property type="match status" value="1"/>
</dbReference>
<dbReference type="InterPro" id="IPR001261">
    <property type="entry name" value="ArgE/DapE_CS"/>
</dbReference>
<dbReference type="InterPro" id="IPR036264">
    <property type="entry name" value="Bact_exopeptidase_dim_dom"/>
</dbReference>
<dbReference type="InterPro" id="IPR005941">
    <property type="entry name" value="DapE_proteobac"/>
</dbReference>
<dbReference type="InterPro" id="IPR002933">
    <property type="entry name" value="Peptidase_M20"/>
</dbReference>
<dbReference type="InterPro" id="IPR011650">
    <property type="entry name" value="Peptidase_M20_dimer"/>
</dbReference>
<dbReference type="InterPro" id="IPR050072">
    <property type="entry name" value="Peptidase_M20A"/>
</dbReference>
<dbReference type="NCBIfam" id="TIGR01246">
    <property type="entry name" value="dapE_proteo"/>
    <property type="match status" value="1"/>
</dbReference>
<dbReference type="NCBIfam" id="NF009557">
    <property type="entry name" value="PRK13009.1"/>
    <property type="match status" value="1"/>
</dbReference>
<dbReference type="PANTHER" id="PTHR43808">
    <property type="entry name" value="ACETYLORNITHINE DEACETYLASE"/>
    <property type="match status" value="1"/>
</dbReference>
<dbReference type="PANTHER" id="PTHR43808:SF31">
    <property type="entry name" value="N-ACETYL-L-CITRULLINE DEACETYLASE"/>
    <property type="match status" value="1"/>
</dbReference>
<dbReference type="Pfam" id="PF07687">
    <property type="entry name" value="M20_dimer"/>
    <property type="match status" value="1"/>
</dbReference>
<dbReference type="Pfam" id="PF01546">
    <property type="entry name" value="Peptidase_M20"/>
    <property type="match status" value="1"/>
</dbReference>
<dbReference type="SUPFAM" id="SSF55031">
    <property type="entry name" value="Bacterial exopeptidase dimerisation domain"/>
    <property type="match status" value="1"/>
</dbReference>
<dbReference type="SUPFAM" id="SSF53187">
    <property type="entry name" value="Zn-dependent exopeptidases"/>
    <property type="match status" value="1"/>
</dbReference>
<dbReference type="PROSITE" id="PS00758">
    <property type="entry name" value="ARGE_DAPE_CPG2_1"/>
    <property type="match status" value="1"/>
</dbReference>
<dbReference type="PROSITE" id="PS00759">
    <property type="entry name" value="ARGE_DAPE_CPG2_2"/>
    <property type="match status" value="1"/>
</dbReference>
<keyword id="KW-0028">Amino-acid biosynthesis</keyword>
<keyword id="KW-0170">Cobalt</keyword>
<keyword id="KW-0220">Diaminopimelate biosynthesis</keyword>
<keyword id="KW-0378">Hydrolase</keyword>
<keyword id="KW-0457">Lysine biosynthesis</keyword>
<keyword id="KW-0479">Metal-binding</keyword>
<keyword id="KW-0862">Zinc</keyword>
<gene>
    <name evidence="1" type="primary">dapE</name>
    <name type="ordered locus">mlr4849</name>
</gene>
<proteinExistence type="inferred from homology"/>
<feature type="chain" id="PRO_0000375682" description="Succinyl-diaminopimelate desuccinylase">
    <location>
        <begin position="1"/>
        <end position="397"/>
    </location>
</feature>
<feature type="active site" evidence="1">
    <location>
        <position position="76"/>
    </location>
</feature>
<feature type="active site" description="Proton acceptor" evidence="1">
    <location>
        <position position="141"/>
    </location>
</feature>
<feature type="binding site" evidence="1">
    <location>
        <position position="74"/>
    </location>
    <ligand>
        <name>Zn(2+)</name>
        <dbReference type="ChEBI" id="CHEBI:29105"/>
        <label>1</label>
    </ligand>
</feature>
<feature type="binding site" evidence="1">
    <location>
        <position position="107"/>
    </location>
    <ligand>
        <name>Zn(2+)</name>
        <dbReference type="ChEBI" id="CHEBI:29105"/>
        <label>1</label>
    </ligand>
</feature>
<feature type="binding site" evidence="1">
    <location>
        <position position="107"/>
    </location>
    <ligand>
        <name>Zn(2+)</name>
        <dbReference type="ChEBI" id="CHEBI:29105"/>
        <label>2</label>
    </ligand>
</feature>
<feature type="binding site" evidence="1">
    <location>
        <position position="142"/>
    </location>
    <ligand>
        <name>Zn(2+)</name>
        <dbReference type="ChEBI" id="CHEBI:29105"/>
        <label>2</label>
    </ligand>
</feature>
<feature type="binding site" evidence="1">
    <location>
        <position position="170"/>
    </location>
    <ligand>
        <name>Zn(2+)</name>
        <dbReference type="ChEBI" id="CHEBI:29105"/>
        <label>1</label>
    </ligand>
</feature>
<feature type="binding site" evidence="1">
    <location>
        <position position="368"/>
    </location>
    <ligand>
        <name>Zn(2+)</name>
        <dbReference type="ChEBI" id="CHEBI:29105"/>
        <label>2</label>
    </ligand>
</feature>
<evidence type="ECO:0000255" key="1">
    <source>
        <dbReference type="HAMAP-Rule" id="MF_01690"/>
    </source>
</evidence>